<accession>Q99W19</accession>
<reference key="1">
    <citation type="journal article" date="2001" name="Lancet">
        <title>Whole genome sequencing of meticillin-resistant Staphylococcus aureus.</title>
        <authorList>
            <person name="Kuroda M."/>
            <person name="Ohta T."/>
            <person name="Uchiyama I."/>
            <person name="Baba T."/>
            <person name="Yuzawa H."/>
            <person name="Kobayashi I."/>
            <person name="Cui L."/>
            <person name="Oguchi A."/>
            <person name="Aoki K."/>
            <person name="Nagai Y."/>
            <person name="Lian J.-Q."/>
            <person name="Ito T."/>
            <person name="Kanamori M."/>
            <person name="Matsumaru H."/>
            <person name="Maruyama A."/>
            <person name="Murakami H."/>
            <person name="Hosoyama A."/>
            <person name="Mizutani-Ui Y."/>
            <person name="Takahashi N.K."/>
            <person name="Sawano T."/>
            <person name="Inoue R."/>
            <person name="Kaito C."/>
            <person name="Sekimizu K."/>
            <person name="Hirakawa H."/>
            <person name="Kuhara S."/>
            <person name="Goto S."/>
            <person name="Yabuzaki J."/>
            <person name="Kanehisa M."/>
            <person name="Yamashita A."/>
            <person name="Oshima K."/>
            <person name="Furuya K."/>
            <person name="Yoshino C."/>
            <person name="Shiba T."/>
            <person name="Hattori M."/>
            <person name="Ogasawara N."/>
            <person name="Hayashi H."/>
            <person name="Hiramatsu K."/>
        </authorList>
    </citation>
    <scope>NUCLEOTIDE SEQUENCE [LARGE SCALE GENOMIC DNA]</scope>
    <source>
        <strain>Mu50 / ATCC 700699</strain>
    </source>
</reference>
<dbReference type="EMBL" id="BA000017">
    <property type="protein sequence ID" value="BAB56755.1"/>
    <property type="molecule type" value="Genomic_DNA"/>
</dbReference>
<dbReference type="RefSeq" id="WP_000798967.1">
    <property type="nucleotide sequence ID" value="NC_002758.2"/>
</dbReference>
<dbReference type="SMR" id="Q99W19"/>
<dbReference type="KEGG" id="sav:SAV0593"/>
<dbReference type="HOGENOM" id="CLU_2156795_0_0_9"/>
<dbReference type="Proteomes" id="UP000002481">
    <property type="component" value="Chromosome"/>
</dbReference>
<dbReference type="HAMAP" id="MF_01863">
    <property type="entry name" value="UPF0741"/>
    <property type="match status" value="1"/>
</dbReference>
<dbReference type="InterPro" id="IPR009910">
    <property type="entry name" value="DUF1450"/>
</dbReference>
<dbReference type="InterPro" id="IPR020880">
    <property type="entry name" value="UPF0741"/>
</dbReference>
<dbReference type="Pfam" id="PF07293">
    <property type="entry name" value="DUF1450"/>
    <property type="match status" value="1"/>
</dbReference>
<comment type="similarity">
    <text evidence="1">Belongs to the UPF0741 family.</text>
</comment>
<protein>
    <recommendedName>
        <fullName evidence="1">UPF0741 protein SAV0593</fullName>
    </recommendedName>
</protein>
<proteinExistence type="inferred from homology"/>
<evidence type="ECO:0000255" key="1">
    <source>
        <dbReference type="HAMAP-Rule" id="MF_01863"/>
    </source>
</evidence>
<evidence type="ECO:0000256" key="2">
    <source>
        <dbReference type="SAM" id="MobiDB-lite"/>
    </source>
</evidence>
<name>Y593_STAAM</name>
<feature type="chain" id="PRO_0000372752" description="UPF0741 protein SAV0593">
    <location>
        <begin position="1"/>
        <end position="113"/>
    </location>
</feature>
<feature type="region of interest" description="Disordered" evidence="2">
    <location>
        <begin position="68"/>
        <end position="113"/>
    </location>
</feature>
<feature type="coiled-coil region" evidence="1">
    <location>
        <begin position="78"/>
        <end position="113"/>
    </location>
</feature>
<feature type="compositionally biased region" description="Basic residues" evidence="2">
    <location>
        <begin position="85"/>
        <end position="94"/>
    </location>
</feature>
<feature type="compositionally biased region" description="Basic and acidic residues" evidence="2">
    <location>
        <begin position="95"/>
        <end position="113"/>
    </location>
</feature>
<organism>
    <name type="scientific">Staphylococcus aureus (strain Mu50 / ATCC 700699)</name>
    <dbReference type="NCBI Taxonomy" id="158878"/>
    <lineage>
        <taxon>Bacteria</taxon>
        <taxon>Bacillati</taxon>
        <taxon>Bacillota</taxon>
        <taxon>Bacilli</taxon>
        <taxon>Bacillales</taxon>
        <taxon>Staphylococcaceae</taxon>
        <taxon>Staphylococcus</taxon>
    </lineage>
</organism>
<sequence length="113" mass="13536">MKNTFLICDECQAVNIRTLQKKLEKLDPDAEIVIGCQSYCGPGRRKTFTFVNNRPLAALTEEELIEKVSQQLKKPRDPEEEERLRKRHEERKRRKEEQDRKLKEKLEKRKAQQ</sequence>
<keyword id="KW-0175">Coiled coil</keyword>
<gene>
    <name type="ordered locus">SAV0593</name>
</gene>